<protein>
    <recommendedName>
        <fullName evidence="1">Endoribonuclease YbeY</fullName>
        <ecNumber evidence="1">3.1.-.-</ecNumber>
    </recommendedName>
</protein>
<organism>
    <name type="scientific">Rhodospirillum rubrum (strain ATCC 11170 / ATH 1.1.1 / DSM 467 / LMG 4362 / NCIMB 8255 / S1)</name>
    <dbReference type="NCBI Taxonomy" id="269796"/>
    <lineage>
        <taxon>Bacteria</taxon>
        <taxon>Pseudomonadati</taxon>
        <taxon>Pseudomonadota</taxon>
        <taxon>Alphaproteobacteria</taxon>
        <taxon>Rhodospirillales</taxon>
        <taxon>Rhodospirillaceae</taxon>
        <taxon>Rhodospirillum</taxon>
    </lineage>
</organism>
<comment type="function">
    <text evidence="1">Single strand-specific metallo-endoribonuclease involved in late-stage 70S ribosome quality control and in maturation of the 3' terminus of the 16S rRNA.</text>
</comment>
<comment type="cofactor">
    <cofactor evidence="1">
        <name>Zn(2+)</name>
        <dbReference type="ChEBI" id="CHEBI:29105"/>
    </cofactor>
    <text evidence="1">Binds 1 zinc ion.</text>
</comment>
<comment type="subcellular location">
    <subcellularLocation>
        <location evidence="1">Cytoplasm</location>
    </subcellularLocation>
</comment>
<comment type="similarity">
    <text evidence="1">Belongs to the endoribonuclease YbeY family.</text>
</comment>
<sequence length="200" mass="20767">MPADPALPDPVPPGPTAPVPTDYPVRLAVDGAEGPWEALVPGVAALVEQAVLAAVAAGDPSGYGLTPGTPLEISLLLTDDAAVQALNRDYRGQDKPTNVLSFAALDAEEPLPEDGEPVLLGDVALARETVVREAADLGIAPADHVFHLVVHGVLHLLGYDHEEEEEALDMEGLETAILGARGIADPYADARGPEQEGSDR</sequence>
<accession>Q2RMS9</accession>
<feature type="chain" id="PRO_0000284296" description="Endoribonuclease YbeY">
    <location>
        <begin position="1"/>
        <end position="200"/>
    </location>
</feature>
<feature type="region of interest" description="Disordered" evidence="2">
    <location>
        <begin position="1"/>
        <end position="22"/>
    </location>
</feature>
<feature type="compositionally biased region" description="Pro residues" evidence="2">
    <location>
        <begin position="1"/>
        <end position="18"/>
    </location>
</feature>
<feature type="binding site" evidence="1">
    <location>
        <position position="151"/>
    </location>
    <ligand>
        <name>Zn(2+)</name>
        <dbReference type="ChEBI" id="CHEBI:29105"/>
        <note>catalytic</note>
    </ligand>
</feature>
<feature type="binding site" evidence="1">
    <location>
        <position position="155"/>
    </location>
    <ligand>
        <name>Zn(2+)</name>
        <dbReference type="ChEBI" id="CHEBI:29105"/>
        <note>catalytic</note>
    </ligand>
</feature>
<feature type="binding site" evidence="1">
    <location>
        <position position="161"/>
    </location>
    <ligand>
        <name>Zn(2+)</name>
        <dbReference type="ChEBI" id="CHEBI:29105"/>
        <note>catalytic</note>
    </ligand>
</feature>
<dbReference type="EC" id="3.1.-.-" evidence="1"/>
<dbReference type="EMBL" id="CP000230">
    <property type="protein sequence ID" value="ABC24566.1"/>
    <property type="molecule type" value="Genomic_DNA"/>
</dbReference>
<dbReference type="RefSeq" id="WP_011391519.1">
    <property type="nucleotide sequence ID" value="NC_007643.1"/>
</dbReference>
<dbReference type="RefSeq" id="YP_428853.1">
    <property type="nucleotide sequence ID" value="NC_007643.1"/>
</dbReference>
<dbReference type="SMR" id="Q2RMS9"/>
<dbReference type="STRING" id="269796.Rru_A3772"/>
<dbReference type="EnsemblBacteria" id="ABC24566">
    <property type="protein sequence ID" value="ABC24566"/>
    <property type="gene ID" value="Rru_A3772"/>
</dbReference>
<dbReference type="KEGG" id="rru:Rru_A3772"/>
<dbReference type="PATRIC" id="fig|269796.9.peg.3894"/>
<dbReference type="eggNOG" id="COG0319">
    <property type="taxonomic scope" value="Bacteria"/>
</dbReference>
<dbReference type="HOGENOM" id="CLU_106710_0_0_5"/>
<dbReference type="PhylomeDB" id="Q2RMS9"/>
<dbReference type="Proteomes" id="UP000001929">
    <property type="component" value="Chromosome"/>
</dbReference>
<dbReference type="GO" id="GO:0005737">
    <property type="term" value="C:cytoplasm"/>
    <property type="evidence" value="ECO:0007669"/>
    <property type="project" value="UniProtKB-SubCell"/>
</dbReference>
<dbReference type="GO" id="GO:0004222">
    <property type="term" value="F:metalloendopeptidase activity"/>
    <property type="evidence" value="ECO:0007669"/>
    <property type="project" value="InterPro"/>
</dbReference>
<dbReference type="GO" id="GO:0004521">
    <property type="term" value="F:RNA endonuclease activity"/>
    <property type="evidence" value="ECO:0007669"/>
    <property type="project" value="UniProtKB-UniRule"/>
</dbReference>
<dbReference type="GO" id="GO:0008270">
    <property type="term" value="F:zinc ion binding"/>
    <property type="evidence" value="ECO:0007669"/>
    <property type="project" value="UniProtKB-UniRule"/>
</dbReference>
<dbReference type="GO" id="GO:0006364">
    <property type="term" value="P:rRNA processing"/>
    <property type="evidence" value="ECO:0007669"/>
    <property type="project" value="UniProtKB-UniRule"/>
</dbReference>
<dbReference type="Gene3D" id="3.40.390.30">
    <property type="entry name" value="Metalloproteases ('zincins'), catalytic domain"/>
    <property type="match status" value="1"/>
</dbReference>
<dbReference type="HAMAP" id="MF_00009">
    <property type="entry name" value="Endoribonucl_YbeY"/>
    <property type="match status" value="1"/>
</dbReference>
<dbReference type="InterPro" id="IPR023091">
    <property type="entry name" value="MetalPrtase_cat_dom_sf_prd"/>
</dbReference>
<dbReference type="InterPro" id="IPR002036">
    <property type="entry name" value="YbeY"/>
</dbReference>
<dbReference type="InterPro" id="IPR020549">
    <property type="entry name" value="YbeY_CS"/>
</dbReference>
<dbReference type="NCBIfam" id="TIGR00043">
    <property type="entry name" value="rRNA maturation RNase YbeY"/>
    <property type="match status" value="1"/>
</dbReference>
<dbReference type="PANTHER" id="PTHR46986">
    <property type="entry name" value="ENDORIBONUCLEASE YBEY, CHLOROPLASTIC"/>
    <property type="match status" value="1"/>
</dbReference>
<dbReference type="PANTHER" id="PTHR46986:SF1">
    <property type="entry name" value="ENDORIBONUCLEASE YBEY, CHLOROPLASTIC"/>
    <property type="match status" value="1"/>
</dbReference>
<dbReference type="Pfam" id="PF02130">
    <property type="entry name" value="YbeY"/>
    <property type="match status" value="1"/>
</dbReference>
<dbReference type="SUPFAM" id="SSF55486">
    <property type="entry name" value="Metalloproteases ('zincins'), catalytic domain"/>
    <property type="match status" value="1"/>
</dbReference>
<dbReference type="PROSITE" id="PS01306">
    <property type="entry name" value="UPF0054"/>
    <property type="match status" value="1"/>
</dbReference>
<reference key="1">
    <citation type="journal article" date="2011" name="Stand. Genomic Sci.">
        <title>Complete genome sequence of Rhodospirillum rubrum type strain (S1).</title>
        <authorList>
            <person name="Munk A.C."/>
            <person name="Copeland A."/>
            <person name="Lucas S."/>
            <person name="Lapidus A."/>
            <person name="Del Rio T.G."/>
            <person name="Barry K."/>
            <person name="Detter J.C."/>
            <person name="Hammon N."/>
            <person name="Israni S."/>
            <person name="Pitluck S."/>
            <person name="Brettin T."/>
            <person name="Bruce D."/>
            <person name="Han C."/>
            <person name="Tapia R."/>
            <person name="Gilna P."/>
            <person name="Schmutz J."/>
            <person name="Larimer F."/>
            <person name="Land M."/>
            <person name="Kyrpides N.C."/>
            <person name="Mavromatis K."/>
            <person name="Richardson P."/>
            <person name="Rohde M."/>
            <person name="Goeker M."/>
            <person name="Klenk H.P."/>
            <person name="Zhang Y."/>
            <person name="Roberts G.P."/>
            <person name="Reslewic S."/>
            <person name="Schwartz D.C."/>
        </authorList>
    </citation>
    <scope>NUCLEOTIDE SEQUENCE [LARGE SCALE GENOMIC DNA]</scope>
    <source>
        <strain>ATCC 11170 / ATH 1.1.1 / DSM 467 / LMG 4362 / NCIMB 8255 / S1</strain>
    </source>
</reference>
<name>YBEY_RHORT</name>
<proteinExistence type="inferred from homology"/>
<keyword id="KW-0963">Cytoplasm</keyword>
<keyword id="KW-0255">Endonuclease</keyword>
<keyword id="KW-0378">Hydrolase</keyword>
<keyword id="KW-0479">Metal-binding</keyword>
<keyword id="KW-0540">Nuclease</keyword>
<keyword id="KW-1185">Reference proteome</keyword>
<keyword id="KW-0690">Ribosome biogenesis</keyword>
<keyword id="KW-0698">rRNA processing</keyword>
<keyword id="KW-0862">Zinc</keyword>
<gene>
    <name evidence="1" type="primary">ybeY</name>
    <name type="ordered locus">Rru_A3772</name>
</gene>
<evidence type="ECO:0000255" key="1">
    <source>
        <dbReference type="HAMAP-Rule" id="MF_00009"/>
    </source>
</evidence>
<evidence type="ECO:0000256" key="2">
    <source>
        <dbReference type="SAM" id="MobiDB-lite"/>
    </source>
</evidence>